<dbReference type="EC" id="2.7.7.8" evidence="1"/>
<dbReference type="EMBL" id="CP000613">
    <property type="protein sequence ID" value="ACJ00287.1"/>
    <property type="molecule type" value="Genomic_DNA"/>
</dbReference>
<dbReference type="RefSeq" id="WP_012568067.1">
    <property type="nucleotide sequence ID" value="NC_011420.2"/>
</dbReference>
<dbReference type="SMR" id="B6IVG3"/>
<dbReference type="STRING" id="414684.RC1_2919"/>
<dbReference type="KEGG" id="rce:RC1_2919"/>
<dbReference type="eggNOG" id="COG1185">
    <property type="taxonomic scope" value="Bacteria"/>
</dbReference>
<dbReference type="HOGENOM" id="CLU_004217_2_2_5"/>
<dbReference type="OrthoDB" id="9804305at2"/>
<dbReference type="Proteomes" id="UP000001591">
    <property type="component" value="Chromosome"/>
</dbReference>
<dbReference type="GO" id="GO:0005829">
    <property type="term" value="C:cytosol"/>
    <property type="evidence" value="ECO:0007669"/>
    <property type="project" value="TreeGrafter"/>
</dbReference>
<dbReference type="GO" id="GO:0000175">
    <property type="term" value="F:3'-5'-RNA exonuclease activity"/>
    <property type="evidence" value="ECO:0007669"/>
    <property type="project" value="TreeGrafter"/>
</dbReference>
<dbReference type="GO" id="GO:0000287">
    <property type="term" value="F:magnesium ion binding"/>
    <property type="evidence" value="ECO:0007669"/>
    <property type="project" value="UniProtKB-UniRule"/>
</dbReference>
<dbReference type="GO" id="GO:0004654">
    <property type="term" value="F:polyribonucleotide nucleotidyltransferase activity"/>
    <property type="evidence" value="ECO:0007669"/>
    <property type="project" value="UniProtKB-UniRule"/>
</dbReference>
<dbReference type="GO" id="GO:0003723">
    <property type="term" value="F:RNA binding"/>
    <property type="evidence" value="ECO:0007669"/>
    <property type="project" value="UniProtKB-UniRule"/>
</dbReference>
<dbReference type="GO" id="GO:0006402">
    <property type="term" value="P:mRNA catabolic process"/>
    <property type="evidence" value="ECO:0007669"/>
    <property type="project" value="UniProtKB-UniRule"/>
</dbReference>
<dbReference type="GO" id="GO:0006396">
    <property type="term" value="P:RNA processing"/>
    <property type="evidence" value="ECO:0007669"/>
    <property type="project" value="InterPro"/>
</dbReference>
<dbReference type="CDD" id="cd02393">
    <property type="entry name" value="KH-I_PNPase"/>
    <property type="match status" value="1"/>
</dbReference>
<dbReference type="CDD" id="cd11363">
    <property type="entry name" value="RNase_PH_PNPase_1"/>
    <property type="match status" value="1"/>
</dbReference>
<dbReference type="CDD" id="cd11364">
    <property type="entry name" value="RNase_PH_PNPase_2"/>
    <property type="match status" value="1"/>
</dbReference>
<dbReference type="CDD" id="cd04472">
    <property type="entry name" value="S1_PNPase"/>
    <property type="match status" value="1"/>
</dbReference>
<dbReference type="FunFam" id="2.40.50.140:FF:000107">
    <property type="entry name" value="Polyribonucleotide nucleotidyltransferase"/>
    <property type="match status" value="1"/>
</dbReference>
<dbReference type="FunFam" id="3.30.1370.10:FF:000001">
    <property type="entry name" value="Polyribonucleotide nucleotidyltransferase"/>
    <property type="match status" value="1"/>
</dbReference>
<dbReference type="FunFam" id="3.30.230.70:FF:000001">
    <property type="entry name" value="Polyribonucleotide nucleotidyltransferase"/>
    <property type="match status" value="1"/>
</dbReference>
<dbReference type="FunFam" id="3.30.230.70:FF:000002">
    <property type="entry name" value="Polyribonucleotide nucleotidyltransferase"/>
    <property type="match status" value="1"/>
</dbReference>
<dbReference type="Gene3D" id="3.30.230.70">
    <property type="entry name" value="GHMP Kinase, N-terminal domain"/>
    <property type="match status" value="2"/>
</dbReference>
<dbReference type="Gene3D" id="3.30.1370.10">
    <property type="entry name" value="K Homology domain, type 1"/>
    <property type="match status" value="1"/>
</dbReference>
<dbReference type="Gene3D" id="2.40.50.140">
    <property type="entry name" value="Nucleic acid-binding proteins"/>
    <property type="match status" value="1"/>
</dbReference>
<dbReference type="HAMAP" id="MF_01595">
    <property type="entry name" value="PNPase"/>
    <property type="match status" value="1"/>
</dbReference>
<dbReference type="InterPro" id="IPR001247">
    <property type="entry name" value="ExoRNase_PH_dom1"/>
</dbReference>
<dbReference type="InterPro" id="IPR015847">
    <property type="entry name" value="ExoRNase_PH_dom2"/>
</dbReference>
<dbReference type="InterPro" id="IPR036345">
    <property type="entry name" value="ExoRNase_PH_dom2_sf"/>
</dbReference>
<dbReference type="InterPro" id="IPR004087">
    <property type="entry name" value="KH_dom"/>
</dbReference>
<dbReference type="InterPro" id="IPR004088">
    <property type="entry name" value="KH_dom_type_1"/>
</dbReference>
<dbReference type="InterPro" id="IPR036612">
    <property type="entry name" value="KH_dom_type_1_sf"/>
</dbReference>
<dbReference type="InterPro" id="IPR012340">
    <property type="entry name" value="NA-bd_OB-fold"/>
</dbReference>
<dbReference type="InterPro" id="IPR012162">
    <property type="entry name" value="PNPase"/>
</dbReference>
<dbReference type="InterPro" id="IPR027408">
    <property type="entry name" value="PNPase/RNase_PH_dom_sf"/>
</dbReference>
<dbReference type="InterPro" id="IPR015848">
    <property type="entry name" value="PNPase_PH_RNA-bd_bac/org-type"/>
</dbReference>
<dbReference type="InterPro" id="IPR020568">
    <property type="entry name" value="Ribosomal_Su5_D2-typ_SF"/>
</dbReference>
<dbReference type="InterPro" id="IPR003029">
    <property type="entry name" value="S1_domain"/>
</dbReference>
<dbReference type="NCBIfam" id="TIGR03591">
    <property type="entry name" value="polynuc_phos"/>
    <property type="match status" value="1"/>
</dbReference>
<dbReference type="NCBIfam" id="NF008805">
    <property type="entry name" value="PRK11824.1"/>
    <property type="match status" value="1"/>
</dbReference>
<dbReference type="PANTHER" id="PTHR11252">
    <property type="entry name" value="POLYRIBONUCLEOTIDE NUCLEOTIDYLTRANSFERASE"/>
    <property type="match status" value="1"/>
</dbReference>
<dbReference type="PANTHER" id="PTHR11252:SF0">
    <property type="entry name" value="POLYRIBONUCLEOTIDE NUCLEOTIDYLTRANSFERASE 1, MITOCHONDRIAL"/>
    <property type="match status" value="1"/>
</dbReference>
<dbReference type="Pfam" id="PF00013">
    <property type="entry name" value="KH_1"/>
    <property type="match status" value="1"/>
</dbReference>
<dbReference type="Pfam" id="PF03726">
    <property type="entry name" value="PNPase"/>
    <property type="match status" value="1"/>
</dbReference>
<dbReference type="Pfam" id="PF01138">
    <property type="entry name" value="RNase_PH"/>
    <property type="match status" value="2"/>
</dbReference>
<dbReference type="Pfam" id="PF03725">
    <property type="entry name" value="RNase_PH_C"/>
    <property type="match status" value="2"/>
</dbReference>
<dbReference type="Pfam" id="PF00575">
    <property type="entry name" value="S1"/>
    <property type="match status" value="1"/>
</dbReference>
<dbReference type="PIRSF" id="PIRSF005499">
    <property type="entry name" value="PNPase"/>
    <property type="match status" value="1"/>
</dbReference>
<dbReference type="SMART" id="SM00322">
    <property type="entry name" value="KH"/>
    <property type="match status" value="1"/>
</dbReference>
<dbReference type="SMART" id="SM00316">
    <property type="entry name" value="S1"/>
    <property type="match status" value="1"/>
</dbReference>
<dbReference type="SUPFAM" id="SSF54791">
    <property type="entry name" value="Eukaryotic type KH-domain (KH-domain type I)"/>
    <property type="match status" value="1"/>
</dbReference>
<dbReference type="SUPFAM" id="SSF50249">
    <property type="entry name" value="Nucleic acid-binding proteins"/>
    <property type="match status" value="1"/>
</dbReference>
<dbReference type="SUPFAM" id="SSF55666">
    <property type="entry name" value="Ribonuclease PH domain 2-like"/>
    <property type="match status" value="2"/>
</dbReference>
<dbReference type="SUPFAM" id="SSF54211">
    <property type="entry name" value="Ribosomal protein S5 domain 2-like"/>
    <property type="match status" value="2"/>
</dbReference>
<dbReference type="PROSITE" id="PS50084">
    <property type="entry name" value="KH_TYPE_1"/>
    <property type="match status" value="1"/>
</dbReference>
<dbReference type="PROSITE" id="PS50126">
    <property type="entry name" value="S1"/>
    <property type="match status" value="1"/>
</dbReference>
<gene>
    <name evidence="1" type="primary">pnp</name>
    <name type="ordered locus">RC1_2919</name>
</gene>
<protein>
    <recommendedName>
        <fullName evidence="1">Polyribonucleotide nucleotidyltransferase</fullName>
        <ecNumber evidence="1">2.7.7.8</ecNumber>
    </recommendedName>
    <alternativeName>
        <fullName evidence="1">Polynucleotide phosphorylase</fullName>
        <shortName evidence="1">PNPase</shortName>
    </alternativeName>
</protein>
<comment type="function">
    <text evidence="1">Involved in mRNA degradation. Catalyzes the phosphorolysis of single-stranded polyribonucleotides processively in the 3'- to 5'-direction.</text>
</comment>
<comment type="catalytic activity">
    <reaction evidence="1">
        <text>RNA(n+1) + phosphate = RNA(n) + a ribonucleoside 5'-diphosphate</text>
        <dbReference type="Rhea" id="RHEA:22096"/>
        <dbReference type="Rhea" id="RHEA-COMP:14527"/>
        <dbReference type="Rhea" id="RHEA-COMP:17342"/>
        <dbReference type="ChEBI" id="CHEBI:43474"/>
        <dbReference type="ChEBI" id="CHEBI:57930"/>
        <dbReference type="ChEBI" id="CHEBI:140395"/>
        <dbReference type="EC" id="2.7.7.8"/>
    </reaction>
</comment>
<comment type="cofactor">
    <cofactor evidence="1">
        <name>Mg(2+)</name>
        <dbReference type="ChEBI" id="CHEBI:18420"/>
    </cofactor>
</comment>
<comment type="subcellular location">
    <subcellularLocation>
        <location evidence="1">Cytoplasm</location>
    </subcellularLocation>
</comment>
<comment type="similarity">
    <text evidence="1">Belongs to the polyribonucleotide nucleotidyltransferase family.</text>
</comment>
<sequence length="707" mass="76204">MFKVFRKEMMWGGRKLVLETGKVARQADGAVWASYGDTVVLATAVAAKAPKPGVDFFPLTVNYQEKAFAAGKIPGGFFKREGRPTEKEVLTSRLIDRPIRPLFADGYRNETQVIVTVLSHDLENDPDIVAMVATSAALTISGIPFLGPIGAARVGYKDGQFVLNPTLEQVEASDLDLVVAGTTEGVLMVESEAKELPEDVMLGAVMFGHREFQPVIDLIIDLAEMAAKDPMAIPAPAYDKDAVKTRMAALIGQDVRQAYTLTVKQERYAAIGAAKLKALETMVAEGTAPEAVASVFKELESDILRGSVIETGKRIDGRTTVDIRPIVSQVGVLPRAHGSALFTRGETQALVVATLGTNQDEQIVDALEGEYRESFMLHYNFPPYSVGEAGRMGSPGRREIGHGKLAWRAVRPLLPTKETFPYTIRVVSEITESNGSSSMATVCGSSLSMMDAGVPLPRPVAGIAMGLIKEGEKFAVLSDILGDEDHLGDMDFKVAGTEKGVTALQMDIKITSITEEIMKIALAQAKDGRVHILSEMNKALNTAREAVNQNAPRITVINIPKDKIRDVIGSGGKVIREIVEQTGAKIDIEDDGTVKVAAVDGKASEAAIKWIKGIVAEPEVGEIYEGKVVKIMDFGAFVNFLGSRDGLVHISELKNERVAKVTDVVKQGDAVKVKVLGFDDRGKVKLSMKVVDQTTGEDLSKKEEAEG</sequence>
<name>PNP_RHOCS</name>
<organism>
    <name type="scientific">Rhodospirillum centenum (strain ATCC 51521 / SW)</name>
    <dbReference type="NCBI Taxonomy" id="414684"/>
    <lineage>
        <taxon>Bacteria</taxon>
        <taxon>Pseudomonadati</taxon>
        <taxon>Pseudomonadota</taxon>
        <taxon>Alphaproteobacteria</taxon>
        <taxon>Rhodospirillales</taxon>
        <taxon>Rhodospirillaceae</taxon>
        <taxon>Rhodospirillum</taxon>
    </lineage>
</organism>
<evidence type="ECO:0000255" key="1">
    <source>
        <dbReference type="HAMAP-Rule" id="MF_01595"/>
    </source>
</evidence>
<keyword id="KW-0963">Cytoplasm</keyword>
<keyword id="KW-0460">Magnesium</keyword>
<keyword id="KW-0479">Metal-binding</keyword>
<keyword id="KW-0548">Nucleotidyltransferase</keyword>
<keyword id="KW-1185">Reference proteome</keyword>
<keyword id="KW-0694">RNA-binding</keyword>
<keyword id="KW-0808">Transferase</keyword>
<accession>B6IVG3</accession>
<feature type="chain" id="PRO_1000192486" description="Polyribonucleotide nucleotidyltransferase">
    <location>
        <begin position="1"/>
        <end position="707"/>
    </location>
</feature>
<feature type="domain" description="KH" evidence="1">
    <location>
        <begin position="552"/>
        <end position="615"/>
    </location>
</feature>
<feature type="domain" description="S1 motif" evidence="1">
    <location>
        <begin position="621"/>
        <end position="689"/>
    </location>
</feature>
<feature type="binding site" evidence="1">
    <location>
        <position position="485"/>
    </location>
    <ligand>
        <name>Mg(2+)</name>
        <dbReference type="ChEBI" id="CHEBI:18420"/>
    </ligand>
</feature>
<feature type="binding site" evidence="1">
    <location>
        <position position="491"/>
    </location>
    <ligand>
        <name>Mg(2+)</name>
        <dbReference type="ChEBI" id="CHEBI:18420"/>
    </ligand>
</feature>
<reference key="1">
    <citation type="submission" date="2007-03" db="EMBL/GenBank/DDBJ databases">
        <title>Genome sequence of Rhodospirillum centenum.</title>
        <authorList>
            <person name="Touchman J.W."/>
            <person name="Bauer C."/>
            <person name="Blankenship R.E."/>
        </authorList>
    </citation>
    <scope>NUCLEOTIDE SEQUENCE [LARGE SCALE GENOMIC DNA]</scope>
    <source>
        <strain>ATCC 51521 / SW</strain>
    </source>
</reference>
<proteinExistence type="inferred from homology"/>